<feature type="chain" id="PRO_0000202158" description="Peroxisomal acyl-coenzyme A thioester hydrolase 1">
    <location>
        <begin position="1"/>
        <end position="349"/>
    </location>
</feature>
<feature type="short sequence motif" description="Microbody targeting signal" evidence="2">
    <location>
        <begin position="347"/>
        <end position="349"/>
    </location>
</feature>
<feature type="active site" description="Charge relay system" evidence="1">
    <location>
        <position position="259"/>
    </location>
</feature>
<feature type="active site" description="Charge relay system" evidence="1">
    <location>
        <position position="282"/>
    </location>
</feature>
<feature type="active site" description="Charge relay system" evidence="1">
    <location>
        <position position="333"/>
    </location>
</feature>
<feature type="strand" evidence="5">
    <location>
        <begin position="17"/>
        <end position="19"/>
    </location>
</feature>
<feature type="strand" evidence="5">
    <location>
        <begin position="21"/>
        <end position="29"/>
    </location>
</feature>
<feature type="helix" evidence="5">
    <location>
        <begin position="42"/>
        <end position="54"/>
    </location>
</feature>
<feature type="strand" evidence="5">
    <location>
        <begin position="62"/>
        <end position="70"/>
    </location>
</feature>
<feature type="strand" evidence="5">
    <location>
        <begin position="81"/>
        <end position="89"/>
    </location>
</feature>
<feature type="strand" evidence="5">
    <location>
        <begin position="91"/>
        <end position="102"/>
    </location>
</feature>
<feature type="strand" evidence="5">
    <location>
        <begin position="105"/>
        <end position="115"/>
    </location>
</feature>
<protein>
    <recommendedName>
        <fullName>Peroxisomal acyl-coenzyme A thioester hydrolase 1</fullName>
        <ecNumber evidence="3">3.1.2.2</ecNumber>
    </recommendedName>
    <alternativeName>
        <fullName>Peroxisomal long-chain acyl-CoA thioesterase 1</fullName>
    </alternativeName>
</protein>
<dbReference type="EC" id="3.1.2.2" evidence="3"/>
<dbReference type="EMBL" id="X85972">
    <property type="protein sequence ID" value="CAA59960.1"/>
    <property type="molecule type" value="Genomic_DNA"/>
</dbReference>
<dbReference type="EMBL" id="X87611">
    <property type="protein sequence ID" value="CAA60943.1"/>
    <property type="molecule type" value="Genomic_DNA"/>
</dbReference>
<dbReference type="EMBL" id="AF124265">
    <property type="protein sequence ID" value="AAD27617.1"/>
    <property type="molecule type" value="Genomic_DNA"/>
</dbReference>
<dbReference type="EMBL" id="Z49519">
    <property type="protein sequence ID" value="CAA89543.1"/>
    <property type="molecule type" value="Genomic_DNA"/>
</dbReference>
<dbReference type="EMBL" id="BK006943">
    <property type="protein sequence ID" value="DAA08810.1"/>
    <property type="molecule type" value="Genomic_DNA"/>
</dbReference>
<dbReference type="PIR" id="S52763">
    <property type="entry name" value="S52763"/>
</dbReference>
<dbReference type="RefSeq" id="NP_012553.3">
    <property type="nucleotide sequence ID" value="NM_001181677.3"/>
</dbReference>
<dbReference type="PDB" id="1TBU">
    <property type="method" value="X-ray"/>
    <property type="resolution" value="2.20 A"/>
    <property type="chains" value="A/B/C/D=1-118"/>
</dbReference>
<dbReference type="PDBsum" id="1TBU"/>
<dbReference type="SMR" id="P41903"/>
<dbReference type="BioGRID" id="33774">
    <property type="interactions" value="65"/>
</dbReference>
<dbReference type="DIP" id="DIP-4480N"/>
<dbReference type="FunCoup" id="P41903">
    <property type="interactions" value="222"/>
</dbReference>
<dbReference type="IntAct" id="P41903">
    <property type="interactions" value="14"/>
</dbReference>
<dbReference type="MINT" id="P41903"/>
<dbReference type="STRING" id="4932.YJR019C"/>
<dbReference type="iPTMnet" id="P41903"/>
<dbReference type="PaxDb" id="4932-YJR019C"/>
<dbReference type="PeptideAtlas" id="P41903"/>
<dbReference type="EnsemblFungi" id="YJR019C_mRNA">
    <property type="protein sequence ID" value="YJR019C"/>
    <property type="gene ID" value="YJR019C"/>
</dbReference>
<dbReference type="GeneID" id="853477"/>
<dbReference type="KEGG" id="sce:YJR019C"/>
<dbReference type="AGR" id="SGD:S000003780"/>
<dbReference type="SGD" id="S000003780">
    <property type="gene designation" value="TES1"/>
</dbReference>
<dbReference type="VEuPathDB" id="FungiDB:YJR019C"/>
<dbReference type="eggNOG" id="KOG3016">
    <property type="taxonomic scope" value="Eukaryota"/>
</dbReference>
<dbReference type="GeneTree" id="ENSGT00390000004207"/>
<dbReference type="HOGENOM" id="CLU_032690_2_0_1"/>
<dbReference type="InParanoid" id="P41903"/>
<dbReference type="OMA" id="QVWFRTN"/>
<dbReference type="OrthoDB" id="68328at2759"/>
<dbReference type="BioCyc" id="MetaCyc:YJR019C-MONOMER"/>
<dbReference type="BioCyc" id="YEAST:YJR019C-MONOMER"/>
<dbReference type="BRENDA" id="3.1.2.2">
    <property type="organism ID" value="984"/>
</dbReference>
<dbReference type="BRENDA" id="3.1.2.20">
    <property type="organism ID" value="984"/>
</dbReference>
<dbReference type="Reactome" id="R-SCE-193368">
    <property type="pathway name" value="Synthesis of bile acids and bile salts via 7alpha-hydroxycholesterol"/>
</dbReference>
<dbReference type="Reactome" id="R-SCE-2046106">
    <property type="pathway name" value="alpha-linolenic acid (ALA) metabolism"/>
</dbReference>
<dbReference type="Reactome" id="R-SCE-389887">
    <property type="pathway name" value="Beta-oxidation of pristanoyl-CoA"/>
</dbReference>
<dbReference type="Reactome" id="R-SCE-390247">
    <property type="pathway name" value="Beta-oxidation of very long chain fatty acids"/>
</dbReference>
<dbReference type="Reactome" id="R-SCE-9033241">
    <property type="pathway name" value="Peroxisomal protein import"/>
</dbReference>
<dbReference type="BioGRID-ORCS" id="853477">
    <property type="hits" value="0 hits in 10 CRISPR screens"/>
</dbReference>
<dbReference type="EvolutionaryTrace" id="P41903"/>
<dbReference type="PRO" id="PR:P41903"/>
<dbReference type="Proteomes" id="UP000002311">
    <property type="component" value="Chromosome X"/>
</dbReference>
<dbReference type="RNAct" id="P41903">
    <property type="molecule type" value="protein"/>
</dbReference>
<dbReference type="GO" id="GO:0005739">
    <property type="term" value="C:mitochondrion"/>
    <property type="evidence" value="ECO:0007005"/>
    <property type="project" value="SGD"/>
</dbReference>
<dbReference type="GO" id="GO:0005782">
    <property type="term" value="C:peroxisomal matrix"/>
    <property type="evidence" value="ECO:0000318"/>
    <property type="project" value="GO_Central"/>
</dbReference>
<dbReference type="GO" id="GO:0005777">
    <property type="term" value="C:peroxisome"/>
    <property type="evidence" value="ECO:0000314"/>
    <property type="project" value="SGD"/>
</dbReference>
<dbReference type="GO" id="GO:0052689">
    <property type="term" value="F:carboxylic ester hydrolase activity"/>
    <property type="evidence" value="ECO:0007669"/>
    <property type="project" value="UniProtKB-KW"/>
</dbReference>
<dbReference type="GO" id="GO:0047617">
    <property type="term" value="F:fatty acyl-CoA hydrolase activity"/>
    <property type="evidence" value="ECO:0000314"/>
    <property type="project" value="SGD"/>
</dbReference>
<dbReference type="GO" id="GO:0006637">
    <property type="term" value="P:acyl-CoA metabolic process"/>
    <property type="evidence" value="ECO:0000318"/>
    <property type="project" value="GO_Central"/>
</dbReference>
<dbReference type="GO" id="GO:0006635">
    <property type="term" value="P:fatty acid beta-oxidation"/>
    <property type="evidence" value="ECO:0000315"/>
    <property type="project" value="SGD"/>
</dbReference>
<dbReference type="GO" id="GO:0009062">
    <property type="term" value="P:fatty acid catabolic process"/>
    <property type="evidence" value="ECO:0000318"/>
    <property type="project" value="GO_Central"/>
</dbReference>
<dbReference type="GO" id="GO:0019395">
    <property type="term" value="P:fatty acid oxidation"/>
    <property type="evidence" value="ECO:0000315"/>
    <property type="project" value="SGD"/>
</dbReference>
<dbReference type="CDD" id="cd03444">
    <property type="entry name" value="Thioesterase_II_repeat1"/>
    <property type="match status" value="1"/>
</dbReference>
<dbReference type="CDD" id="cd03445">
    <property type="entry name" value="Thioesterase_II_repeat2"/>
    <property type="match status" value="1"/>
</dbReference>
<dbReference type="FunFam" id="2.40.160.210:FF:000005">
    <property type="entry name" value="Acyl-CoA thioesterase"/>
    <property type="match status" value="1"/>
</dbReference>
<dbReference type="Gene3D" id="2.40.160.210">
    <property type="entry name" value="Acyl-CoA thioesterase, double hotdog domain"/>
    <property type="match status" value="1"/>
</dbReference>
<dbReference type="InterPro" id="IPR042171">
    <property type="entry name" value="Acyl-CoA_hotdog"/>
</dbReference>
<dbReference type="InterPro" id="IPR003703">
    <property type="entry name" value="Acyl_CoA_thio"/>
</dbReference>
<dbReference type="InterPro" id="IPR029069">
    <property type="entry name" value="HotDog_dom_sf"/>
</dbReference>
<dbReference type="InterPro" id="IPR049449">
    <property type="entry name" value="TesB_ACOT8-like_N"/>
</dbReference>
<dbReference type="InterPro" id="IPR025652">
    <property type="entry name" value="TesB_C"/>
</dbReference>
<dbReference type="NCBIfam" id="TIGR00189">
    <property type="entry name" value="tesB"/>
    <property type="match status" value="1"/>
</dbReference>
<dbReference type="PANTHER" id="PTHR11066">
    <property type="entry name" value="ACYL-COA THIOESTERASE"/>
    <property type="match status" value="1"/>
</dbReference>
<dbReference type="PANTHER" id="PTHR11066:SF34">
    <property type="entry name" value="ACYL-COENZYME A THIOESTERASE 8"/>
    <property type="match status" value="1"/>
</dbReference>
<dbReference type="Pfam" id="PF13622">
    <property type="entry name" value="4HBT_3"/>
    <property type="match status" value="1"/>
</dbReference>
<dbReference type="Pfam" id="PF02551">
    <property type="entry name" value="Acyl_CoA_thio"/>
    <property type="match status" value="1"/>
</dbReference>
<dbReference type="SUPFAM" id="SSF54637">
    <property type="entry name" value="Thioesterase/thiol ester dehydrase-isomerase"/>
    <property type="match status" value="2"/>
</dbReference>
<organism>
    <name type="scientific">Saccharomyces cerevisiae (strain ATCC 204508 / S288c)</name>
    <name type="common">Baker's yeast</name>
    <dbReference type="NCBI Taxonomy" id="559292"/>
    <lineage>
        <taxon>Eukaryota</taxon>
        <taxon>Fungi</taxon>
        <taxon>Dikarya</taxon>
        <taxon>Ascomycota</taxon>
        <taxon>Saccharomycotina</taxon>
        <taxon>Saccharomycetes</taxon>
        <taxon>Saccharomycetales</taxon>
        <taxon>Saccharomycetaceae</taxon>
        <taxon>Saccharomyces</taxon>
    </lineage>
</organism>
<comment type="function">
    <text evidence="3">Acyl-coenzyme A (acyl-CoA) thioesterases are a group of enzymes that catalyze the hydrolysis of acyl-CoAs to the free fatty acid and coenzyme A (CoASH), providing the potential to regulate intracellular levels of acyl-CoAs, free fatty acids and CoASH. Contributes to growth on fatty acids.</text>
</comment>
<comment type="catalytic activity">
    <reaction evidence="3">
        <text>hexadecanoyl-CoA + H2O = hexadecanoate + CoA + H(+)</text>
        <dbReference type="Rhea" id="RHEA:16645"/>
        <dbReference type="ChEBI" id="CHEBI:7896"/>
        <dbReference type="ChEBI" id="CHEBI:15377"/>
        <dbReference type="ChEBI" id="CHEBI:15378"/>
        <dbReference type="ChEBI" id="CHEBI:57287"/>
        <dbReference type="ChEBI" id="CHEBI:57379"/>
        <dbReference type="EC" id="3.1.2.2"/>
    </reaction>
</comment>
<comment type="subcellular location">
    <subcellularLocation>
        <location evidence="3">Peroxisome</location>
    </subcellularLocation>
</comment>
<comment type="induction">
    <text evidence="3">Up-regulated by oleic acid.</text>
</comment>
<comment type="similarity">
    <text evidence="4">Belongs to the C/M/P thioester hydrolase family.</text>
</comment>
<name>PTE1_YEAST</name>
<accession>P41903</accession>
<accession>D6VWJ4</accession>
<evidence type="ECO:0000250" key="1"/>
<evidence type="ECO:0000255" key="2"/>
<evidence type="ECO:0000269" key="3">
    <source>
    </source>
</evidence>
<evidence type="ECO:0000305" key="4"/>
<evidence type="ECO:0007829" key="5">
    <source>
        <dbReference type="PDB" id="1TBU"/>
    </source>
</evidence>
<keyword id="KW-0002">3D-structure</keyword>
<keyword id="KW-0378">Hydrolase</keyword>
<keyword id="KW-0576">Peroxisome</keyword>
<keyword id="KW-1185">Reference proteome</keyword>
<keyword id="KW-0719">Serine esterase</keyword>
<gene>
    <name type="primary">TES1</name>
    <name type="synonym">PTE1</name>
    <name type="ordered locus">YJR019C</name>
    <name type="ORF">J1456</name>
</gene>
<sequence length="349" mass="40260">MSASKMAMSNLEKILELVPLSPTSFVTKYLPAAPVGSKGTFGGTLVSQSLLASLHTVPLNFFPTSLHSYFIKGGDPRTKITYHVQNLRNGRNFIHKQVSAYQHDKLIFTSMILFAVQRSKEHDSLQHWETIPGLQGKQPDPHRYEEATSLFQKEVLDPQKLSRYASLSDRFQDATSMSKYVDAFQYGVMEYQFPKDMFYSARHTDELDYFVKVRPPITTVEHAGDESSLHKHHPYRIPKSITPENDARYNYVAFAYLSDSYLLLTIPYFHNLPLYCHSFSVSLDHTIYFHQLPHVNNWIYLKISNPRSHWDKHLVQGKYFDTQSGRIMASVSQEGYVVYGSERDIRAKF</sequence>
<proteinExistence type="evidence at protein level"/>
<reference key="1">
    <citation type="submission" date="1995-03" db="EMBL/GenBank/DDBJ databases">
        <authorList>
            <person name="Hani J."/>
            <person name="Stumpf G."/>
            <person name="Domdey H."/>
        </authorList>
    </citation>
    <scope>NUCLEOTIDE SEQUENCE [GENOMIC DNA]</scope>
    <source>
        <strain>DH484</strain>
    </source>
</reference>
<reference key="2">
    <citation type="journal article" date="1999" name="J. Biol. Chem.">
        <title>Identification of peroxisomal acyl-CoA thioesterases in yeast and humans.</title>
        <authorList>
            <person name="Jones J.M."/>
            <person name="Nau K."/>
            <person name="Geraghty M.T."/>
            <person name="Erdmann R."/>
            <person name="Gould S.J."/>
        </authorList>
    </citation>
    <scope>NUCLEOTIDE SEQUENCE [GENOMIC DNA]</scope>
    <scope>FUNCTION</scope>
    <scope>CATALYTIC ACTIVITY</scope>
    <scope>SUBCELLULAR LOCATION</scope>
    <scope>INDUCTION</scope>
</reference>
<reference key="3">
    <citation type="journal article" date="1996" name="EMBO J.">
        <title>Complete nucleotide sequence of Saccharomyces cerevisiae chromosome X.</title>
        <authorList>
            <person name="Galibert F."/>
            <person name="Alexandraki D."/>
            <person name="Baur A."/>
            <person name="Boles E."/>
            <person name="Chalwatzis N."/>
            <person name="Chuat J.-C."/>
            <person name="Coster F."/>
            <person name="Cziepluch C."/>
            <person name="de Haan M."/>
            <person name="Domdey H."/>
            <person name="Durand P."/>
            <person name="Entian K.-D."/>
            <person name="Gatius M."/>
            <person name="Goffeau A."/>
            <person name="Grivell L.A."/>
            <person name="Hennemann A."/>
            <person name="Herbert C.J."/>
            <person name="Heumann K."/>
            <person name="Hilger F."/>
            <person name="Hollenberg C.P."/>
            <person name="Huang M.-E."/>
            <person name="Jacq C."/>
            <person name="Jauniaux J.-C."/>
            <person name="Katsoulou C."/>
            <person name="Kirchrath L."/>
            <person name="Kleine K."/>
            <person name="Kordes E."/>
            <person name="Koetter P."/>
            <person name="Liebl S."/>
            <person name="Louis E.J."/>
            <person name="Manus V."/>
            <person name="Mewes H.-W."/>
            <person name="Miosga T."/>
            <person name="Obermaier B."/>
            <person name="Perea J."/>
            <person name="Pohl T.M."/>
            <person name="Portetelle D."/>
            <person name="Pujol A."/>
            <person name="Purnelle B."/>
            <person name="Ramezani Rad M."/>
            <person name="Rasmussen S.W."/>
            <person name="Rose M."/>
            <person name="Rossau R."/>
            <person name="Schaaff-Gerstenschlaeger I."/>
            <person name="Smits P.H.M."/>
            <person name="Scarcez T."/>
            <person name="Soriano N."/>
            <person name="To Van D."/>
            <person name="Tzermia M."/>
            <person name="Van Broekhoven A."/>
            <person name="Vandenbol M."/>
            <person name="Wedler H."/>
            <person name="von Wettstein D."/>
            <person name="Wambutt R."/>
            <person name="Zagulski M."/>
            <person name="Zollner A."/>
            <person name="Karpfinger-Hartl L."/>
        </authorList>
    </citation>
    <scope>NUCLEOTIDE SEQUENCE [LARGE SCALE GENOMIC DNA]</scope>
    <source>
        <strain>ATCC 204508 / S288c</strain>
    </source>
</reference>
<reference key="4">
    <citation type="journal article" date="2014" name="G3 (Bethesda)">
        <title>The reference genome sequence of Saccharomyces cerevisiae: Then and now.</title>
        <authorList>
            <person name="Engel S.R."/>
            <person name="Dietrich F.S."/>
            <person name="Fisk D.G."/>
            <person name="Binkley G."/>
            <person name="Balakrishnan R."/>
            <person name="Costanzo M.C."/>
            <person name="Dwight S.S."/>
            <person name="Hitz B.C."/>
            <person name="Karra K."/>
            <person name="Nash R.S."/>
            <person name="Weng S."/>
            <person name="Wong E.D."/>
            <person name="Lloyd P."/>
            <person name="Skrzypek M.S."/>
            <person name="Miyasato S.R."/>
            <person name="Simison M."/>
            <person name="Cherry J.M."/>
        </authorList>
    </citation>
    <scope>GENOME REANNOTATION</scope>
    <source>
        <strain>ATCC 204508 / S288c</strain>
    </source>
</reference>